<organism>
    <name type="scientific">Salmonella enteritidis PT4 (strain P125109)</name>
    <dbReference type="NCBI Taxonomy" id="550537"/>
    <lineage>
        <taxon>Bacteria</taxon>
        <taxon>Pseudomonadati</taxon>
        <taxon>Pseudomonadota</taxon>
        <taxon>Gammaproteobacteria</taxon>
        <taxon>Enterobacterales</taxon>
        <taxon>Enterobacteriaceae</taxon>
        <taxon>Salmonella</taxon>
    </lineage>
</organism>
<name>MTOX_SALEP</name>
<keyword id="KW-0274">FAD</keyword>
<keyword id="KW-0285">Flavoprotein</keyword>
<keyword id="KW-0560">Oxidoreductase</keyword>
<proteinExistence type="inferred from homology"/>
<protein>
    <recommendedName>
        <fullName evidence="1">N-methyl-L-tryptophan oxidase</fullName>
        <shortName evidence="1">MTOX</shortName>
        <ecNumber evidence="1">1.5.3.-</ecNumber>
    </recommendedName>
</protein>
<comment type="function">
    <text evidence="1">Catalyzes the oxidative demethylation of N-methyl-L-tryptophan.</text>
</comment>
<comment type="catalytic activity">
    <reaction evidence="1">
        <text>N(alpha)-methyl-L-tryptophan + O2 + H2O = L-tryptophan + formaldehyde + H2O2</text>
        <dbReference type="Rhea" id="RHEA:28006"/>
        <dbReference type="ChEBI" id="CHEBI:15377"/>
        <dbReference type="ChEBI" id="CHEBI:15379"/>
        <dbReference type="ChEBI" id="CHEBI:16240"/>
        <dbReference type="ChEBI" id="CHEBI:16842"/>
        <dbReference type="ChEBI" id="CHEBI:57283"/>
        <dbReference type="ChEBI" id="CHEBI:57912"/>
    </reaction>
</comment>
<comment type="cofactor">
    <cofactor evidence="1">
        <name>FAD</name>
        <dbReference type="ChEBI" id="CHEBI:57692"/>
    </cofactor>
    <text evidence="1">Binds 1 FAD per subunit.</text>
</comment>
<comment type="subunit">
    <text evidence="1">Monomer.</text>
</comment>
<comment type="similarity">
    <text evidence="1">Belongs to the MSOX/MTOX family. MTOX subfamily.</text>
</comment>
<dbReference type="EC" id="1.5.3.-" evidence="1"/>
<dbReference type="EMBL" id="AM933172">
    <property type="protein sequence ID" value="CAR33468.1"/>
    <property type="molecule type" value="Genomic_DNA"/>
</dbReference>
<dbReference type="RefSeq" id="WP_000872758.1">
    <property type="nucleotide sequence ID" value="NC_011294.1"/>
</dbReference>
<dbReference type="SMR" id="B5QY05"/>
<dbReference type="KEGG" id="set:SEN1888"/>
<dbReference type="HOGENOM" id="CLU_007884_2_1_6"/>
<dbReference type="Proteomes" id="UP000000613">
    <property type="component" value="Chromosome"/>
</dbReference>
<dbReference type="GO" id="GO:0005829">
    <property type="term" value="C:cytosol"/>
    <property type="evidence" value="ECO:0007669"/>
    <property type="project" value="TreeGrafter"/>
</dbReference>
<dbReference type="GO" id="GO:0050660">
    <property type="term" value="F:flavin adenine dinucleotide binding"/>
    <property type="evidence" value="ECO:0007669"/>
    <property type="project" value="InterPro"/>
</dbReference>
<dbReference type="GO" id="GO:0050131">
    <property type="term" value="F:N-methyl-L-amino-acid oxidase activity"/>
    <property type="evidence" value="ECO:0007669"/>
    <property type="project" value="InterPro"/>
</dbReference>
<dbReference type="GO" id="GO:0008115">
    <property type="term" value="F:sarcosine oxidase activity"/>
    <property type="evidence" value="ECO:0007669"/>
    <property type="project" value="TreeGrafter"/>
</dbReference>
<dbReference type="Gene3D" id="3.30.9.10">
    <property type="entry name" value="D-Amino Acid Oxidase, subunit A, domain 2"/>
    <property type="match status" value="1"/>
</dbReference>
<dbReference type="Gene3D" id="3.50.50.60">
    <property type="entry name" value="FAD/NAD(P)-binding domain"/>
    <property type="match status" value="1"/>
</dbReference>
<dbReference type="HAMAP" id="MF_00515">
    <property type="entry name" value="MTOX"/>
    <property type="match status" value="1"/>
</dbReference>
<dbReference type="InterPro" id="IPR006076">
    <property type="entry name" value="FAD-dep_OxRdtase"/>
</dbReference>
<dbReference type="InterPro" id="IPR036188">
    <property type="entry name" value="FAD/NAD-bd_sf"/>
</dbReference>
<dbReference type="InterPro" id="IPR023493">
    <property type="entry name" value="Me_Trp_Oxase_MTOX"/>
</dbReference>
<dbReference type="InterPro" id="IPR045170">
    <property type="entry name" value="MTOX"/>
</dbReference>
<dbReference type="NCBIfam" id="NF008425">
    <property type="entry name" value="PRK11259.1"/>
    <property type="match status" value="1"/>
</dbReference>
<dbReference type="PANTHER" id="PTHR10961:SF7">
    <property type="entry name" value="FAD DEPENDENT OXIDOREDUCTASE DOMAIN-CONTAINING PROTEIN"/>
    <property type="match status" value="1"/>
</dbReference>
<dbReference type="PANTHER" id="PTHR10961">
    <property type="entry name" value="PEROXISOMAL SARCOSINE OXIDASE"/>
    <property type="match status" value="1"/>
</dbReference>
<dbReference type="Pfam" id="PF01266">
    <property type="entry name" value="DAO"/>
    <property type="match status" value="1"/>
</dbReference>
<dbReference type="SUPFAM" id="SSF54373">
    <property type="entry name" value="FAD-linked reductases, C-terminal domain"/>
    <property type="match status" value="1"/>
</dbReference>
<dbReference type="SUPFAM" id="SSF51905">
    <property type="entry name" value="FAD/NAD(P)-binding domain"/>
    <property type="match status" value="1"/>
</dbReference>
<accession>B5QY05</accession>
<feature type="chain" id="PRO_1000127445" description="N-methyl-L-tryptophan oxidase">
    <location>
        <begin position="1"/>
        <end position="372"/>
    </location>
</feature>
<feature type="binding site" evidence="1">
    <location>
        <begin position="4"/>
        <end position="34"/>
    </location>
    <ligand>
        <name>FAD</name>
        <dbReference type="ChEBI" id="CHEBI:57692"/>
    </ligand>
</feature>
<feature type="modified residue" description="S-8alpha-FAD cysteine" evidence="1">
    <location>
        <position position="307"/>
    </location>
</feature>
<gene>
    <name evidence="1" type="primary">solA</name>
    <name type="ordered locus">SEN1888</name>
</gene>
<reference key="1">
    <citation type="journal article" date="2008" name="Genome Res.">
        <title>Comparative genome analysis of Salmonella enteritidis PT4 and Salmonella gallinarum 287/91 provides insights into evolutionary and host adaptation pathways.</title>
        <authorList>
            <person name="Thomson N.R."/>
            <person name="Clayton D.J."/>
            <person name="Windhorst D."/>
            <person name="Vernikos G."/>
            <person name="Davidson S."/>
            <person name="Churcher C."/>
            <person name="Quail M.A."/>
            <person name="Stevens M."/>
            <person name="Jones M.A."/>
            <person name="Watson M."/>
            <person name="Barron A."/>
            <person name="Layton A."/>
            <person name="Pickard D."/>
            <person name="Kingsley R.A."/>
            <person name="Bignell A."/>
            <person name="Clark L."/>
            <person name="Harris B."/>
            <person name="Ormond D."/>
            <person name="Abdellah Z."/>
            <person name="Brooks K."/>
            <person name="Cherevach I."/>
            <person name="Chillingworth T."/>
            <person name="Woodward J."/>
            <person name="Norberczak H."/>
            <person name="Lord A."/>
            <person name="Arrowsmith C."/>
            <person name="Jagels K."/>
            <person name="Moule S."/>
            <person name="Mungall K."/>
            <person name="Saunders M."/>
            <person name="Whitehead S."/>
            <person name="Chabalgoity J.A."/>
            <person name="Maskell D."/>
            <person name="Humphreys T."/>
            <person name="Roberts M."/>
            <person name="Barrow P.A."/>
            <person name="Dougan G."/>
            <person name="Parkhill J."/>
        </authorList>
    </citation>
    <scope>NUCLEOTIDE SEQUENCE [LARGE SCALE GENOMIC DNA]</scope>
    <source>
        <strain>P125109</strain>
    </source>
</reference>
<sequence>MKYDLIIIGSGSVGAAAGYYATRAGLKVLMTDAHMPPHQQGSHHGDTRLIRHAYGEGEKYVPLMLRAQTLWDELSTHNEEPIFVRSGVVNLGPADSAFLANVARSAQQWQLNVERLDATALMTRWPEIRVPDNYIGLFEADSGFLRSELAITTWLRLAREAGCAQLFNSQVSHIHHDDNGVTIETSEGSYHASKALISAGTWVKALVPELPVQPVRKVFAWFKADGRYSTKNRFPAFTGEMPNGDQYYGFPAENDELKIGKHNGGQLIQAPEERKPFAAVASDGAEAFPFLRNVLPGIGGCLHGAACTYDNSPDENFIIDTLPGHENTLVITGLSGHGFKFAPVLGEIAADFALGKTSSFDLTPFRLSRFSQ</sequence>
<evidence type="ECO:0000255" key="1">
    <source>
        <dbReference type="HAMAP-Rule" id="MF_00515"/>
    </source>
</evidence>